<comment type="function">
    <text evidence="1">Responsible for the release of ribosomes from messenger RNA at the termination of protein biosynthesis. May increase the efficiency of translation by recycling ribosomes from one round of translation to another.</text>
</comment>
<comment type="subcellular location">
    <subcellularLocation>
        <location evidence="1">Cytoplasm</location>
    </subcellularLocation>
</comment>
<comment type="similarity">
    <text evidence="1">Belongs to the RRF family.</text>
</comment>
<sequence>MLKEIKTKTKERMLKTIQSFYNDIKGIRTGRASASLLDGIVVNIYGGHQKLNQVAGVSVTDNKTLLIKVWDIGVIGEVKNAILNANLNLNPVVEGNTIRIVLPDLTQETRERLVKLLHQFAENARVAIRNIRRDIMEEIERMQENKKISEDDFHNAKKEIQNITDDNIKKIDGELSIKEKDILNY</sequence>
<organism>
    <name type="scientific">Wolbachia sp. subsp. Brugia malayi (strain TRS)</name>
    <dbReference type="NCBI Taxonomy" id="292805"/>
    <lineage>
        <taxon>Bacteria</taxon>
        <taxon>Pseudomonadati</taxon>
        <taxon>Pseudomonadota</taxon>
        <taxon>Alphaproteobacteria</taxon>
        <taxon>Rickettsiales</taxon>
        <taxon>Anaplasmataceae</taxon>
        <taxon>Wolbachieae</taxon>
        <taxon>Wolbachia</taxon>
    </lineage>
</organism>
<dbReference type="EMBL" id="AE017321">
    <property type="protein sequence ID" value="AAW71393.1"/>
    <property type="molecule type" value="Genomic_DNA"/>
</dbReference>
<dbReference type="RefSeq" id="WP_011257002.1">
    <property type="nucleotide sequence ID" value="NC_006833.1"/>
</dbReference>
<dbReference type="SMR" id="Q5GRI1"/>
<dbReference type="STRING" id="292805.Wbm0805"/>
<dbReference type="KEGG" id="wbm:Wbm0805"/>
<dbReference type="eggNOG" id="COG0233">
    <property type="taxonomic scope" value="Bacteria"/>
</dbReference>
<dbReference type="HOGENOM" id="CLU_073981_2_1_5"/>
<dbReference type="Proteomes" id="UP000000534">
    <property type="component" value="Chromosome"/>
</dbReference>
<dbReference type="GO" id="GO:0005737">
    <property type="term" value="C:cytoplasm"/>
    <property type="evidence" value="ECO:0007669"/>
    <property type="project" value="UniProtKB-SubCell"/>
</dbReference>
<dbReference type="GO" id="GO:0043023">
    <property type="term" value="F:ribosomal large subunit binding"/>
    <property type="evidence" value="ECO:0007669"/>
    <property type="project" value="TreeGrafter"/>
</dbReference>
<dbReference type="GO" id="GO:0006415">
    <property type="term" value="P:translational termination"/>
    <property type="evidence" value="ECO:0007669"/>
    <property type="project" value="UniProtKB-UniRule"/>
</dbReference>
<dbReference type="CDD" id="cd00520">
    <property type="entry name" value="RRF"/>
    <property type="match status" value="1"/>
</dbReference>
<dbReference type="FunFam" id="1.10.132.20:FF:000001">
    <property type="entry name" value="Ribosome-recycling factor"/>
    <property type="match status" value="1"/>
</dbReference>
<dbReference type="FunFam" id="3.30.1360.40:FF:000001">
    <property type="entry name" value="Ribosome-recycling factor"/>
    <property type="match status" value="1"/>
</dbReference>
<dbReference type="Gene3D" id="3.30.1360.40">
    <property type="match status" value="1"/>
</dbReference>
<dbReference type="Gene3D" id="1.10.132.20">
    <property type="entry name" value="Ribosome-recycling factor"/>
    <property type="match status" value="1"/>
</dbReference>
<dbReference type="HAMAP" id="MF_00040">
    <property type="entry name" value="RRF"/>
    <property type="match status" value="1"/>
</dbReference>
<dbReference type="InterPro" id="IPR002661">
    <property type="entry name" value="Ribosome_recyc_fac"/>
</dbReference>
<dbReference type="InterPro" id="IPR023584">
    <property type="entry name" value="Ribosome_recyc_fac_dom"/>
</dbReference>
<dbReference type="InterPro" id="IPR036191">
    <property type="entry name" value="RRF_sf"/>
</dbReference>
<dbReference type="NCBIfam" id="TIGR00496">
    <property type="entry name" value="frr"/>
    <property type="match status" value="1"/>
</dbReference>
<dbReference type="PANTHER" id="PTHR20982:SF3">
    <property type="entry name" value="MITOCHONDRIAL RIBOSOME RECYCLING FACTOR PSEUDO 1"/>
    <property type="match status" value="1"/>
</dbReference>
<dbReference type="PANTHER" id="PTHR20982">
    <property type="entry name" value="RIBOSOME RECYCLING FACTOR"/>
    <property type="match status" value="1"/>
</dbReference>
<dbReference type="Pfam" id="PF01765">
    <property type="entry name" value="RRF"/>
    <property type="match status" value="1"/>
</dbReference>
<dbReference type="SUPFAM" id="SSF55194">
    <property type="entry name" value="Ribosome recycling factor, RRF"/>
    <property type="match status" value="1"/>
</dbReference>
<proteinExistence type="inferred from homology"/>
<gene>
    <name evidence="1" type="primary">frr</name>
    <name type="ordered locus">Wbm0805</name>
</gene>
<keyword id="KW-0963">Cytoplasm</keyword>
<keyword id="KW-0648">Protein biosynthesis</keyword>
<keyword id="KW-1185">Reference proteome</keyword>
<reference key="1">
    <citation type="journal article" date="2005" name="PLoS Biol.">
        <title>The Wolbachia genome of Brugia malayi: endosymbiont evolution within a human pathogenic nematode.</title>
        <authorList>
            <person name="Foster J."/>
            <person name="Ganatra M."/>
            <person name="Kamal I."/>
            <person name="Ware J."/>
            <person name="Makarova K."/>
            <person name="Ivanova N."/>
            <person name="Bhattacharyya A."/>
            <person name="Kapatral V."/>
            <person name="Kumar S."/>
            <person name="Posfai J."/>
            <person name="Vincze T."/>
            <person name="Ingram J."/>
            <person name="Moran L."/>
            <person name="Lapidus A."/>
            <person name="Omelchenko M."/>
            <person name="Kyrpides N."/>
            <person name="Ghedin E."/>
            <person name="Wang S."/>
            <person name="Goltsman E."/>
            <person name="Joukov V."/>
            <person name="Ostrovskaya O."/>
            <person name="Tsukerman K."/>
            <person name="Mazur M."/>
            <person name="Comb D."/>
            <person name="Koonin E."/>
            <person name="Slatko B."/>
        </authorList>
    </citation>
    <scope>NUCLEOTIDE SEQUENCE [LARGE SCALE GENOMIC DNA]</scope>
    <source>
        <strain>TRS</strain>
    </source>
</reference>
<protein>
    <recommendedName>
        <fullName evidence="1">Ribosome-recycling factor</fullName>
        <shortName evidence="1">RRF</shortName>
    </recommendedName>
    <alternativeName>
        <fullName evidence="1">Ribosome-releasing factor</fullName>
    </alternativeName>
</protein>
<feature type="chain" id="PRO_0000167581" description="Ribosome-recycling factor">
    <location>
        <begin position="1"/>
        <end position="185"/>
    </location>
</feature>
<accession>Q5GRI1</accession>
<name>RRF_WOLTR</name>
<evidence type="ECO:0000255" key="1">
    <source>
        <dbReference type="HAMAP-Rule" id="MF_00040"/>
    </source>
</evidence>